<dbReference type="EMBL" id="CP000492">
    <property type="protein sequence ID" value="ABL66544.1"/>
    <property type="molecule type" value="Genomic_DNA"/>
</dbReference>
<dbReference type="RefSeq" id="WP_011746321.1">
    <property type="nucleotide sequence ID" value="NC_008639.1"/>
</dbReference>
<dbReference type="SMR" id="A1BJG7"/>
<dbReference type="STRING" id="290317.Cpha266_2556"/>
<dbReference type="KEGG" id="cph:Cpha266_2556"/>
<dbReference type="eggNOG" id="COG1381">
    <property type="taxonomic scope" value="Bacteria"/>
</dbReference>
<dbReference type="HOGENOM" id="CLU_066632_1_0_10"/>
<dbReference type="OrthoDB" id="9789152at2"/>
<dbReference type="Proteomes" id="UP000008701">
    <property type="component" value="Chromosome"/>
</dbReference>
<dbReference type="GO" id="GO:0043590">
    <property type="term" value="C:bacterial nucleoid"/>
    <property type="evidence" value="ECO:0007669"/>
    <property type="project" value="TreeGrafter"/>
</dbReference>
<dbReference type="GO" id="GO:0006310">
    <property type="term" value="P:DNA recombination"/>
    <property type="evidence" value="ECO:0007669"/>
    <property type="project" value="UniProtKB-UniRule"/>
</dbReference>
<dbReference type="GO" id="GO:0006302">
    <property type="term" value="P:double-strand break repair"/>
    <property type="evidence" value="ECO:0007669"/>
    <property type="project" value="TreeGrafter"/>
</dbReference>
<dbReference type="Gene3D" id="2.40.50.140">
    <property type="entry name" value="Nucleic acid-binding proteins"/>
    <property type="match status" value="1"/>
</dbReference>
<dbReference type="Gene3D" id="1.20.1440.120">
    <property type="entry name" value="Recombination protein O, C-terminal domain"/>
    <property type="match status" value="1"/>
</dbReference>
<dbReference type="HAMAP" id="MF_00201">
    <property type="entry name" value="RecO"/>
    <property type="match status" value="1"/>
</dbReference>
<dbReference type="InterPro" id="IPR037278">
    <property type="entry name" value="ARFGAP/RecO"/>
</dbReference>
<dbReference type="InterPro" id="IPR022572">
    <property type="entry name" value="DNA_rep/recomb_RecO_N"/>
</dbReference>
<dbReference type="InterPro" id="IPR012340">
    <property type="entry name" value="NA-bd_OB-fold"/>
</dbReference>
<dbReference type="InterPro" id="IPR003717">
    <property type="entry name" value="RecO"/>
</dbReference>
<dbReference type="InterPro" id="IPR042242">
    <property type="entry name" value="RecO_C"/>
</dbReference>
<dbReference type="NCBIfam" id="TIGR00613">
    <property type="entry name" value="reco"/>
    <property type="match status" value="1"/>
</dbReference>
<dbReference type="PANTHER" id="PTHR33991">
    <property type="entry name" value="DNA REPAIR PROTEIN RECO"/>
    <property type="match status" value="1"/>
</dbReference>
<dbReference type="PANTHER" id="PTHR33991:SF1">
    <property type="entry name" value="DNA REPAIR PROTEIN RECO"/>
    <property type="match status" value="1"/>
</dbReference>
<dbReference type="Pfam" id="PF02565">
    <property type="entry name" value="RecO_C"/>
    <property type="match status" value="1"/>
</dbReference>
<dbReference type="Pfam" id="PF11967">
    <property type="entry name" value="RecO_N"/>
    <property type="match status" value="1"/>
</dbReference>
<dbReference type="SUPFAM" id="SSF57863">
    <property type="entry name" value="ArfGap/RecO-like zinc finger"/>
    <property type="match status" value="1"/>
</dbReference>
<dbReference type="SUPFAM" id="SSF50249">
    <property type="entry name" value="Nucleic acid-binding proteins"/>
    <property type="match status" value="1"/>
</dbReference>
<comment type="function">
    <text evidence="1">Involved in DNA repair and RecF pathway recombination.</text>
</comment>
<comment type="similarity">
    <text evidence="1">Belongs to the RecO family.</text>
</comment>
<evidence type="ECO:0000255" key="1">
    <source>
        <dbReference type="HAMAP-Rule" id="MF_00201"/>
    </source>
</evidence>
<proteinExistence type="inferred from homology"/>
<name>RECO_CHLPD</name>
<protein>
    <recommendedName>
        <fullName evidence="1">DNA repair protein RecO</fullName>
    </recommendedName>
    <alternativeName>
        <fullName evidence="1">Recombination protein O</fullName>
    </alternativeName>
</protein>
<keyword id="KW-0227">DNA damage</keyword>
<keyword id="KW-0233">DNA recombination</keyword>
<keyword id="KW-0234">DNA repair</keyword>
<keyword id="KW-1185">Reference proteome</keyword>
<organism>
    <name type="scientific">Chlorobium phaeobacteroides (strain DSM 266 / SMG 266 / 2430)</name>
    <dbReference type="NCBI Taxonomy" id="290317"/>
    <lineage>
        <taxon>Bacteria</taxon>
        <taxon>Pseudomonadati</taxon>
        <taxon>Chlorobiota</taxon>
        <taxon>Chlorobiia</taxon>
        <taxon>Chlorobiales</taxon>
        <taxon>Chlorobiaceae</taxon>
        <taxon>Chlorobium/Pelodictyon group</taxon>
        <taxon>Chlorobium</taxon>
    </lineage>
</organism>
<accession>A1BJG7</accession>
<reference key="1">
    <citation type="submission" date="2006-12" db="EMBL/GenBank/DDBJ databases">
        <title>Complete sequence of Chlorobium phaeobacteroides DSM 266.</title>
        <authorList>
            <consortium name="US DOE Joint Genome Institute"/>
            <person name="Copeland A."/>
            <person name="Lucas S."/>
            <person name="Lapidus A."/>
            <person name="Barry K."/>
            <person name="Detter J.C."/>
            <person name="Glavina del Rio T."/>
            <person name="Hammon N."/>
            <person name="Israni S."/>
            <person name="Pitluck S."/>
            <person name="Goltsman E."/>
            <person name="Schmutz J."/>
            <person name="Larimer F."/>
            <person name="Land M."/>
            <person name="Hauser L."/>
            <person name="Mikhailova N."/>
            <person name="Li T."/>
            <person name="Overmann J."/>
            <person name="Bryant D.A."/>
            <person name="Richardson P."/>
        </authorList>
    </citation>
    <scope>NUCLEOTIDE SEQUENCE [LARGE SCALE GENOMIC DNA]</scope>
    <source>
        <strain>DSM 266 / SMG 266 / 2430</strain>
    </source>
</reference>
<gene>
    <name evidence="1" type="primary">recO</name>
    <name type="ordered locus">Cpha266_2556</name>
</gene>
<feature type="chain" id="PRO_1000099371" description="DNA repair protein RecO">
    <location>
        <begin position="1"/>
        <end position="261"/>
    </location>
</feature>
<sequence>MIVKTRAIVLREIRYRDQSKICSLFTREFGLLSVIIKGGRNPKSKLAGRFIAGTVLDIVLYKKTTREIQLVSEGNLLFSPMVPQPDIERYAIMYRIIDLVSQSIDGQEKNIPLFSLIASVLEELYSTSDRFRLLYSWFLLKLVSLLGFEPSIHRCVLSHEEISPATLAENKGELCFLFNPGGVALPASKSVIENENRPLSMATYALLSAISSTPLNLLKNIEAIPPQTDLLCNLLEEYCTLHLVHHPHKKNIAIVSQILSE</sequence>